<dbReference type="EC" id="6.1.1.22" evidence="1"/>
<dbReference type="EMBL" id="BX908798">
    <property type="protein sequence ID" value="CAF23070.1"/>
    <property type="molecule type" value="Genomic_DNA"/>
</dbReference>
<dbReference type="RefSeq" id="WP_011174896.1">
    <property type="nucleotide sequence ID" value="NC_005861.2"/>
</dbReference>
<dbReference type="SMR" id="Q6MEC9"/>
<dbReference type="STRING" id="264201.pc0346"/>
<dbReference type="KEGG" id="pcu:PC_RS01700"/>
<dbReference type="eggNOG" id="COG0017">
    <property type="taxonomic scope" value="Bacteria"/>
</dbReference>
<dbReference type="HOGENOM" id="CLU_004553_2_0_0"/>
<dbReference type="OrthoDB" id="9762036at2"/>
<dbReference type="Proteomes" id="UP000000529">
    <property type="component" value="Chromosome"/>
</dbReference>
<dbReference type="GO" id="GO:0005737">
    <property type="term" value="C:cytoplasm"/>
    <property type="evidence" value="ECO:0007669"/>
    <property type="project" value="UniProtKB-SubCell"/>
</dbReference>
<dbReference type="GO" id="GO:0004816">
    <property type="term" value="F:asparagine-tRNA ligase activity"/>
    <property type="evidence" value="ECO:0007669"/>
    <property type="project" value="UniProtKB-UniRule"/>
</dbReference>
<dbReference type="GO" id="GO:0005524">
    <property type="term" value="F:ATP binding"/>
    <property type="evidence" value="ECO:0007669"/>
    <property type="project" value="UniProtKB-UniRule"/>
</dbReference>
<dbReference type="GO" id="GO:0003676">
    <property type="term" value="F:nucleic acid binding"/>
    <property type="evidence" value="ECO:0007669"/>
    <property type="project" value="InterPro"/>
</dbReference>
<dbReference type="GO" id="GO:0006421">
    <property type="term" value="P:asparaginyl-tRNA aminoacylation"/>
    <property type="evidence" value="ECO:0007669"/>
    <property type="project" value="UniProtKB-UniRule"/>
</dbReference>
<dbReference type="CDD" id="cd00776">
    <property type="entry name" value="AsxRS_core"/>
    <property type="match status" value="1"/>
</dbReference>
<dbReference type="CDD" id="cd04318">
    <property type="entry name" value="EcAsnRS_like_N"/>
    <property type="match status" value="1"/>
</dbReference>
<dbReference type="FunFam" id="3.30.930.10:FF:000016">
    <property type="entry name" value="Asparagine--tRNA ligase"/>
    <property type="match status" value="1"/>
</dbReference>
<dbReference type="Gene3D" id="3.30.930.10">
    <property type="entry name" value="Bira Bifunctional Protein, Domain 2"/>
    <property type="match status" value="1"/>
</dbReference>
<dbReference type="Gene3D" id="2.40.50.140">
    <property type="entry name" value="Nucleic acid-binding proteins"/>
    <property type="match status" value="1"/>
</dbReference>
<dbReference type="HAMAP" id="MF_00534">
    <property type="entry name" value="Asn_tRNA_synth"/>
    <property type="match status" value="1"/>
</dbReference>
<dbReference type="InterPro" id="IPR004364">
    <property type="entry name" value="Aa-tRNA-synt_II"/>
</dbReference>
<dbReference type="InterPro" id="IPR006195">
    <property type="entry name" value="aa-tRNA-synth_II"/>
</dbReference>
<dbReference type="InterPro" id="IPR045864">
    <property type="entry name" value="aa-tRNA-synth_II/BPL/LPL"/>
</dbReference>
<dbReference type="InterPro" id="IPR004522">
    <property type="entry name" value="Asn-tRNA-ligase"/>
</dbReference>
<dbReference type="InterPro" id="IPR002312">
    <property type="entry name" value="Asp/Asn-tRNA-synth_IIb"/>
</dbReference>
<dbReference type="InterPro" id="IPR012340">
    <property type="entry name" value="NA-bd_OB-fold"/>
</dbReference>
<dbReference type="InterPro" id="IPR004365">
    <property type="entry name" value="NA-bd_OB_tRNA"/>
</dbReference>
<dbReference type="NCBIfam" id="TIGR00457">
    <property type="entry name" value="asnS"/>
    <property type="match status" value="1"/>
</dbReference>
<dbReference type="NCBIfam" id="NF003037">
    <property type="entry name" value="PRK03932.1"/>
    <property type="match status" value="1"/>
</dbReference>
<dbReference type="PANTHER" id="PTHR22594:SF34">
    <property type="entry name" value="ASPARAGINE--TRNA LIGASE, MITOCHONDRIAL-RELATED"/>
    <property type="match status" value="1"/>
</dbReference>
<dbReference type="PANTHER" id="PTHR22594">
    <property type="entry name" value="ASPARTYL/LYSYL-TRNA SYNTHETASE"/>
    <property type="match status" value="1"/>
</dbReference>
<dbReference type="Pfam" id="PF00152">
    <property type="entry name" value="tRNA-synt_2"/>
    <property type="match status" value="1"/>
</dbReference>
<dbReference type="Pfam" id="PF01336">
    <property type="entry name" value="tRNA_anti-codon"/>
    <property type="match status" value="1"/>
</dbReference>
<dbReference type="PRINTS" id="PR01042">
    <property type="entry name" value="TRNASYNTHASP"/>
</dbReference>
<dbReference type="SUPFAM" id="SSF55681">
    <property type="entry name" value="Class II aaRS and biotin synthetases"/>
    <property type="match status" value="1"/>
</dbReference>
<dbReference type="SUPFAM" id="SSF50249">
    <property type="entry name" value="Nucleic acid-binding proteins"/>
    <property type="match status" value="1"/>
</dbReference>
<dbReference type="PROSITE" id="PS50862">
    <property type="entry name" value="AA_TRNA_LIGASE_II"/>
    <property type="match status" value="1"/>
</dbReference>
<keyword id="KW-0030">Aminoacyl-tRNA synthetase</keyword>
<keyword id="KW-0067">ATP-binding</keyword>
<keyword id="KW-0963">Cytoplasm</keyword>
<keyword id="KW-0436">Ligase</keyword>
<keyword id="KW-0547">Nucleotide-binding</keyword>
<keyword id="KW-0648">Protein biosynthesis</keyword>
<keyword id="KW-1185">Reference proteome</keyword>
<proteinExistence type="inferred from homology"/>
<feature type="chain" id="PRO_0000176437" description="Asparagine--tRNA ligase">
    <location>
        <begin position="1"/>
        <end position="467"/>
    </location>
</feature>
<reference key="1">
    <citation type="journal article" date="2004" name="Science">
        <title>Illuminating the evolutionary history of chlamydiae.</title>
        <authorList>
            <person name="Horn M."/>
            <person name="Collingro A."/>
            <person name="Schmitz-Esser S."/>
            <person name="Beier C.L."/>
            <person name="Purkhold U."/>
            <person name="Fartmann B."/>
            <person name="Brandt P."/>
            <person name="Nyakatura G.J."/>
            <person name="Droege M."/>
            <person name="Frishman D."/>
            <person name="Rattei T."/>
            <person name="Mewes H.-W."/>
            <person name="Wagner M."/>
        </authorList>
    </citation>
    <scope>NUCLEOTIDE SEQUENCE [LARGE SCALE GENOMIC DNA]</scope>
    <source>
        <strain>UWE25</strain>
    </source>
</reference>
<gene>
    <name evidence="1" type="primary">asnS</name>
    <name type="ordered locus">pc0346</name>
</gene>
<name>SYN_PARUW</name>
<accession>Q6MEC9</accession>
<sequence>MRTKIKSLRGTTPEVRALIGHDITLKGWVRTVRNQKTFTFIEINDGSTLSNFQIIATPDIAGYDQLINQLSTGVSVSAIGTIVESPGKEQNLEMQATAITIIGKCDPEVYLLQKKRHTFEFLRSIAHLRPRTNTIGAVTRVRNALAFATHQFFQKRGFLYIHTPIITGSDCEGAGKMFQVTTLDQNNPARTPEGRVDYTQDFFGKPTYLTVSGQLNGEIYACALSDVYTFGPTFRAENSNTSRHLAEFWMIEPEMAFADLNDNMDCAEDYLKYILKYVLDNCQEDMEFFNKHVATDLISRLEHVINTSFERASYTYAVRILEKADKKFEYPVKWGLDLQSEHERFLAEEFFGKPVILTDYPKDIKAFYMRTNEDNKTVAAMDVLVPKVGEIIGGSQREERLSVLESKLKEFNLPAEEYWWYLELRKFGSVPHSGFGAGFERLVQFTTGMENIRDVIPFPRHPGKADF</sequence>
<protein>
    <recommendedName>
        <fullName evidence="1">Asparagine--tRNA ligase</fullName>
        <ecNumber evidence="1">6.1.1.22</ecNumber>
    </recommendedName>
    <alternativeName>
        <fullName evidence="1">Asparaginyl-tRNA synthetase</fullName>
        <shortName evidence="1">AsnRS</shortName>
    </alternativeName>
</protein>
<organism>
    <name type="scientific">Protochlamydia amoebophila (strain UWE25)</name>
    <dbReference type="NCBI Taxonomy" id="264201"/>
    <lineage>
        <taxon>Bacteria</taxon>
        <taxon>Pseudomonadati</taxon>
        <taxon>Chlamydiota</taxon>
        <taxon>Chlamydiia</taxon>
        <taxon>Parachlamydiales</taxon>
        <taxon>Parachlamydiaceae</taxon>
        <taxon>Candidatus Protochlamydia</taxon>
    </lineage>
</organism>
<evidence type="ECO:0000255" key="1">
    <source>
        <dbReference type="HAMAP-Rule" id="MF_00534"/>
    </source>
</evidence>
<comment type="catalytic activity">
    <reaction evidence="1">
        <text>tRNA(Asn) + L-asparagine + ATP = L-asparaginyl-tRNA(Asn) + AMP + diphosphate + H(+)</text>
        <dbReference type="Rhea" id="RHEA:11180"/>
        <dbReference type="Rhea" id="RHEA-COMP:9659"/>
        <dbReference type="Rhea" id="RHEA-COMP:9674"/>
        <dbReference type="ChEBI" id="CHEBI:15378"/>
        <dbReference type="ChEBI" id="CHEBI:30616"/>
        <dbReference type="ChEBI" id="CHEBI:33019"/>
        <dbReference type="ChEBI" id="CHEBI:58048"/>
        <dbReference type="ChEBI" id="CHEBI:78442"/>
        <dbReference type="ChEBI" id="CHEBI:78515"/>
        <dbReference type="ChEBI" id="CHEBI:456215"/>
        <dbReference type="EC" id="6.1.1.22"/>
    </reaction>
</comment>
<comment type="subunit">
    <text evidence="1">Homodimer.</text>
</comment>
<comment type="subcellular location">
    <subcellularLocation>
        <location evidence="1">Cytoplasm</location>
    </subcellularLocation>
</comment>
<comment type="similarity">
    <text evidence="1">Belongs to the class-II aminoacyl-tRNA synthetase family.</text>
</comment>